<keyword id="KW-0963">Cytoplasm</keyword>
<keyword id="KW-0489">Methyltransferase</keyword>
<keyword id="KW-0694">RNA-binding</keyword>
<keyword id="KW-0698">rRNA processing</keyword>
<keyword id="KW-0949">S-adenosyl-L-methionine</keyword>
<keyword id="KW-0808">Transferase</keyword>
<comment type="function">
    <text evidence="1">Specifically methylates the guanine in position 2445 (m2G2445) and the guanine in position 2069 (m7G2069) of 23S rRNA.</text>
</comment>
<comment type="catalytic activity">
    <reaction evidence="1">
        <text>guanosine(2445) in 23S rRNA + S-adenosyl-L-methionine = N(2)-methylguanosine(2445) in 23S rRNA + S-adenosyl-L-homocysteine + H(+)</text>
        <dbReference type="Rhea" id="RHEA:42740"/>
        <dbReference type="Rhea" id="RHEA-COMP:10215"/>
        <dbReference type="Rhea" id="RHEA-COMP:10216"/>
        <dbReference type="ChEBI" id="CHEBI:15378"/>
        <dbReference type="ChEBI" id="CHEBI:57856"/>
        <dbReference type="ChEBI" id="CHEBI:59789"/>
        <dbReference type="ChEBI" id="CHEBI:74269"/>
        <dbReference type="ChEBI" id="CHEBI:74481"/>
        <dbReference type="EC" id="2.1.1.173"/>
    </reaction>
</comment>
<comment type="catalytic activity">
    <reaction evidence="1">
        <text>guanosine(2069) in 23S rRNA + S-adenosyl-L-methionine = N(2)-methylguanosine(2069) in 23S rRNA + S-adenosyl-L-homocysteine + H(+)</text>
        <dbReference type="Rhea" id="RHEA:43772"/>
        <dbReference type="Rhea" id="RHEA-COMP:10688"/>
        <dbReference type="Rhea" id="RHEA-COMP:10689"/>
        <dbReference type="ChEBI" id="CHEBI:15378"/>
        <dbReference type="ChEBI" id="CHEBI:57856"/>
        <dbReference type="ChEBI" id="CHEBI:59789"/>
        <dbReference type="ChEBI" id="CHEBI:74269"/>
        <dbReference type="ChEBI" id="CHEBI:74481"/>
        <dbReference type="EC" id="2.1.1.264"/>
    </reaction>
</comment>
<comment type="subcellular location">
    <subcellularLocation>
        <location evidence="1">Cytoplasm</location>
    </subcellularLocation>
</comment>
<comment type="similarity">
    <text evidence="1">Belongs to the methyltransferase superfamily. RlmKL family.</text>
</comment>
<evidence type="ECO:0000255" key="1">
    <source>
        <dbReference type="HAMAP-Rule" id="MF_01858"/>
    </source>
</evidence>
<name>RLMKL_SALA4</name>
<feature type="chain" id="PRO_0000366804" description="Ribosomal RNA large subunit methyltransferase K/L">
    <location>
        <begin position="1"/>
        <end position="702"/>
    </location>
</feature>
<feature type="domain" description="THUMP" evidence="1">
    <location>
        <begin position="43"/>
        <end position="154"/>
    </location>
</feature>
<proteinExistence type="inferred from homology"/>
<protein>
    <recommendedName>
        <fullName evidence="1">Ribosomal RNA large subunit methyltransferase K/L</fullName>
    </recommendedName>
    <domain>
        <recommendedName>
            <fullName evidence="1">23S rRNA m2G2445 methyltransferase</fullName>
            <ecNumber evidence="1">2.1.1.173</ecNumber>
        </recommendedName>
        <alternativeName>
            <fullName evidence="1">rRNA (guanine-N(2)-)-methyltransferase RlmL</fullName>
        </alternativeName>
    </domain>
    <domain>
        <recommendedName>
            <fullName evidence="1">23S rRNA m7G2069 methyltransferase</fullName>
            <ecNumber evidence="1">2.1.1.264</ecNumber>
        </recommendedName>
        <alternativeName>
            <fullName evidence="1">rRNA (guanine-N(7)-)-methyltransferase RlmK</fullName>
        </alternativeName>
    </domain>
</protein>
<dbReference type="EC" id="2.1.1.173" evidence="1"/>
<dbReference type="EC" id="2.1.1.264" evidence="1"/>
<dbReference type="EMBL" id="CP001138">
    <property type="protein sequence ID" value="ACH49700.1"/>
    <property type="molecule type" value="Genomic_DNA"/>
</dbReference>
<dbReference type="SMR" id="B5F1U5"/>
<dbReference type="KEGG" id="sea:SeAg_B1019"/>
<dbReference type="HOGENOM" id="CLU_014042_2_0_6"/>
<dbReference type="Proteomes" id="UP000008819">
    <property type="component" value="Chromosome"/>
</dbReference>
<dbReference type="GO" id="GO:0005737">
    <property type="term" value="C:cytoplasm"/>
    <property type="evidence" value="ECO:0007669"/>
    <property type="project" value="UniProtKB-SubCell"/>
</dbReference>
<dbReference type="GO" id="GO:0052915">
    <property type="term" value="F:23S rRNA (guanine(2445)-N(2))-methyltransferase activity"/>
    <property type="evidence" value="ECO:0007669"/>
    <property type="project" value="UniProtKB-UniRule"/>
</dbReference>
<dbReference type="GO" id="GO:0003723">
    <property type="term" value="F:RNA binding"/>
    <property type="evidence" value="ECO:0007669"/>
    <property type="project" value="UniProtKB-KW"/>
</dbReference>
<dbReference type="GO" id="GO:0070043">
    <property type="term" value="F:rRNA (guanine-N7-)-methyltransferase activity"/>
    <property type="evidence" value="ECO:0007669"/>
    <property type="project" value="UniProtKB-UniRule"/>
</dbReference>
<dbReference type="CDD" id="cd02440">
    <property type="entry name" value="AdoMet_MTases"/>
    <property type="match status" value="2"/>
</dbReference>
<dbReference type="CDD" id="cd11715">
    <property type="entry name" value="THUMP_AdoMetMT"/>
    <property type="match status" value="1"/>
</dbReference>
<dbReference type="FunFam" id="3.30.750.80:FF:000001">
    <property type="entry name" value="Ribosomal RNA large subunit methyltransferase K/L"/>
    <property type="match status" value="1"/>
</dbReference>
<dbReference type="FunFam" id="3.40.50.150:FF:000039">
    <property type="entry name" value="Ribosomal RNA large subunit methyltransferase K/L"/>
    <property type="match status" value="1"/>
</dbReference>
<dbReference type="Gene3D" id="3.30.2130.30">
    <property type="match status" value="1"/>
</dbReference>
<dbReference type="Gene3D" id="3.30.750.80">
    <property type="entry name" value="RNA methyltransferase domain (HRMD) like"/>
    <property type="match status" value="1"/>
</dbReference>
<dbReference type="Gene3D" id="3.40.50.150">
    <property type="entry name" value="Vaccinia Virus protein VP39"/>
    <property type="match status" value="2"/>
</dbReference>
<dbReference type="HAMAP" id="MF_01858">
    <property type="entry name" value="23SrRNA_methyltr_KL"/>
    <property type="match status" value="1"/>
</dbReference>
<dbReference type="InterPro" id="IPR017244">
    <property type="entry name" value="23SrRNA_methyltr_KL"/>
</dbReference>
<dbReference type="InterPro" id="IPR002052">
    <property type="entry name" value="DNA_methylase_N6_adenine_CS"/>
</dbReference>
<dbReference type="InterPro" id="IPR000241">
    <property type="entry name" value="RlmKL-like_Mtase"/>
</dbReference>
<dbReference type="InterPro" id="IPR053943">
    <property type="entry name" value="RlmKL-like_Mtase_CS"/>
</dbReference>
<dbReference type="InterPro" id="IPR054170">
    <property type="entry name" value="RlmL_1st"/>
</dbReference>
<dbReference type="InterPro" id="IPR019614">
    <property type="entry name" value="SAM-dep_methyl-trfase"/>
</dbReference>
<dbReference type="InterPro" id="IPR029063">
    <property type="entry name" value="SAM-dependent_MTases_sf"/>
</dbReference>
<dbReference type="InterPro" id="IPR004114">
    <property type="entry name" value="THUMP_dom"/>
</dbReference>
<dbReference type="NCBIfam" id="NF008748">
    <property type="entry name" value="PRK11783.1"/>
    <property type="match status" value="1"/>
</dbReference>
<dbReference type="PANTHER" id="PTHR47313">
    <property type="entry name" value="RIBOSOMAL RNA LARGE SUBUNIT METHYLTRANSFERASE K/L"/>
    <property type="match status" value="1"/>
</dbReference>
<dbReference type="PANTHER" id="PTHR47313:SF1">
    <property type="entry name" value="RIBOSOMAL RNA LARGE SUBUNIT METHYLTRANSFERASE K_L"/>
    <property type="match status" value="1"/>
</dbReference>
<dbReference type="Pfam" id="PF10672">
    <property type="entry name" value="Methyltrans_SAM"/>
    <property type="match status" value="1"/>
</dbReference>
<dbReference type="Pfam" id="PF22020">
    <property type="entry name" value="RlmL_1st"/>
    <property type="match status" value="1"/>
</dbReference>
<dbReference type="Pfam" id="PF02926">
    <property type="entry name" value="THUMP"/>
    <property type="match status" value="1"/>
</dbReference>
<dbReference type="Pfam" id="PF01170">
    <property type="entry name" value="UPF0020"/>
    <property type="match status" value="1"/>
</dbReference>
<dbReference type="PIRSF" id="PIRSF037618">
    <property type="entry name" value="RNA_Mtase_bacteria_prd"/>
    <property type="match status" value="1"/>
</dbReference>
<dbReference type="PRINTS" id="PR00507">
    <property type="entry name" value="N12N6MTFRASE"/>
</dbReference>
<dbReference type="SMART" id="SM00981">
    <property type="entry name" value="THUMP"/>
    <property type="match status" value="1"/>
</dbReference>
<dbReference type="SUPFAM" id="SSF53335">
    <property type="entry name" value="S-adenosyl-L-methionine-dependent methyltransferases"/>
    <property type="match status" value="2"/>
</dbReference>
<dbReference type="PROSITE" id="PS51165">
    <property type="entry name" value="THUMP"/>
    <property type="match status" value="1"/>
</dbReference>
<dbReference type="PROSITE" id="PS01261">
    <property type="entry name" value="UPF0020"/>
    <property type="match status" value="1"/>
</dbReference>
<organism>
    <name type="scientific">Salmonella agona (strain SL483)</name>
    <dbReference type="NCBI Taxonomy" id="454166"/>
    <lineage>
        <taxon>Bacteria</taxon>
        <taxon>Pseudomonadati</taxon>
        <taxon>Pseudomonadota</taxon>
        <taxon>Gammaproteobacteria</taxon>
        <taxon>Enterobacterales</taxon>
        <taxon>Enterobacteriaceae</taxon>
        <taxon>Salmonella</taxon>
    </lineage>
</organism>
<reference key="1">
    <citation type="journal article" date="2011" name="J. Bacteriol.">
        <title>Comparative genomics of 28 Salmonella enterica isolates: evidence for CRISPR-mediated adaptive sublineage evolution.</title>
        <authorList>
            <person name="Fricke W.F."/>
            <person name="Mammel M.K."/>
            <person name="McDermott P.F."/>
            <person name="Tartera C."/>
            <person name="White D.G."/>
            <person name="Leclerc J.E."/>
            <person name="Ravel J."/>
            <person name="Cebula T.A."/>
        </authorList>
    </citation>
    <scope>NUCLEOTIDE SEQUENCE [LARGE SCALE GENOMIC DNA]</scope>
    <source>
        <strain>SL483</strain>
    </source>
</reference>
<gene>
    <name evidence="1" type="primary">rlmL</name>
    <name type="ordered locus">SeAg_B1019</name>
</gene>
<accession>B5F1U5</accession>
<sequence>MNSLFASTARGLEELLKTELEKLGAVGCQVVQGGVHFQGDTRLIYQSLMWSRLASRIILPMGECKVYSDLDLYLGVQAINWTEIFNPGATFAVHFSGLNDTIRNSQYGAMKVKDAIVDAFTRKNLPRPNVDRESPDLRINVWLNKETASIALDLSGDGLHLRGYRDRTGLAPIKETLAAAIVMRSGWQPGTPLLDPMCGSGTLLIEAAMWATDRAPGLHRGHWGFSGWAQHDETIWQEVKAEAQTRARKGLAEYSSHFYGSDSDARVIERARSNARRAGIGELITFEVKDVAQLSNPLPKGPYGTVISNPPYGERLDSEPALIALHSLLGRTMKNQFGGWNLSLFSASPDLLGSLQLRADKQFKAKNGPLDCVQKNYHIAETTADSKPATVAEDYANRLRKNLKKLEKWARQEGIECYRLYDADLPEYNVAVDRYGDWAVIQEYAPPKTVDAQKARQRLFDIIAATLSVLGIPPNKLVLKTRERQKGKNQYQKMSEKGEFLEVSEYNARLWVNLTDYLDTGLFLDHRIARRMLGEMSKGKDFLNLFSYTGSASVHAGLGGARSTTTVDMSRTYLEWAERNLRLNGLSGRAHRLIQADCLGWLREANEQFDLIFIDPPTFSNSKRMEESFDVQRDHVALMKDLKRLLRKGGTIMFSNNKRGFRMDLEGLAELGLTAQEITQKTLSPDFARNRQIHNCWLIRAA</sequence>